<reference key="1">
    <citation type="journal article" date="2009" name="Genome Res.">
        <title>Newly introduced genomic prophage islands are critical determinants of in vivo competitiveness in the Liverpool epidemic strain of Pseudomonas aeruginosa.</title>
        <authorList>
            <person name="Winstanley C."/>
            <person name="Langille M.G.I."/>
            <person name="Fothergill J.L."/>
            <person name="Kukavica-Ibrulj I."/>
            <person name="Paradis-Bleau C."/>
            <person name="Sanschagrin F."/>
            <person name="Thomson N.R."/>
            <person name="Winsor G.L."/>
            <person name="Quail M.A."/>
            <person name="Lennard N."/>
            <person name="Bignell A."/>
            <person name="Clarke L."/>
            <person name="Seeger K."/>
            <person name="Saunders D."/>
            <person name="Harris D."/>
            <person name="Parkhill J."/>
            <person name="Hancock R.E.W."/>
            <person name="Brinkman F.S.L."/>
            <person name="Levesque R.C."/>
        </authorList>
    </citation>
    <scope>NUCLEOTIDE SEQUENCE [LARGE SCALE GENOMIC DNA]</scope>
    <source>
        <strain>LESB58</strain>
    </source>
</reference>
<proteinExistence type="inferred from homology"/>
<sequence length="432" mass="47859">MPDYVNWLRHASPYINSHRDRTFVVMLPGEGVEHPNFGNIVHDLVLLHSLGARLVLVHGSRPQIEARLAARGLAPRYHRDLRVTDAPTLECVIDAVGSLRIAIEARLSMDMAASPMQGARLRVAGGNLVTARPIGVVEGVDYHHTGEVRRIDRKGIGRLLDERSIVLLSPLGYSPTGEIFNLACEDVAMRAAIDLEAEKLILYGAEQGLLDASGKLVRELRPQQVPAHLQRLGNSYQAELLDAAAQACRAGVKRSHIVSYTEDGALLSELFTRTGNGTLVAQEQFEQLREAGIEDVGGLIELIRPLEEQGILVRRSREVLEREIEQFSIVEREGLIIACAALYPIADSEAGELACLAVNPEYRHGGRGDELLERIEERARGLGLKTLFVLTTRTAHWFRERGFQPSSVERLPAARASLYNFQRNSQVFEKSL</sequence>
<comment type="catalytic activity">
    <reaction evidence="1">
        <text>L-glutamate + acetyl-CoA = N-acetyl-L-glutamate + CoA + H(+)</text>
        <dbReference type="Rhea" id="RHEA:24292"/>
        <dbReference type="ChEBI" id="CHEBI:15378"/>
        <dbReference type="ChEBI" id="CHEBI:29985"/>
        <dbReference type="ChEBI" id="CHEBI:44337"/>
        <dbReference type="ChEBI" id="CHEBI:57287"/>
        <dbReference type="ChEBI" id="CHEBI:57288"/>
        <dbReference type="EC" id="2.3.1.1"/>
    </reaction>
</comment>
<comment type="pathway">
    <text evidence="1">Amino-acid biosynthesis; L-arginine biosynthesis; N(2)-acetyl-L-ornithine from L-glutamate: step 1/4.</text>
</comment>
<comment type="subcellular location">
    <subcellularLocation>
        <location evidence="1">Cytoplasm</location>
    </subcellularLocation>
</comment>
<comment type="similarity">
    <text evidence="1">Belongs to the acetyltransferase family. ArgA subfamily.</text>
</comment>
<dbReference type="EC" id="2.3.1.1" evidence="1"/>
<dbReference type="EMBL" id="FM209186">
    <property type="protein sequence ID" value="CAW30352.1"/>
    <property type="molecule type" value="Genomic_DNA"/>
</dbReference>
<dbReference type="RefSeq" id="WP_003096265.1">
    <property type="nucleotide sequence ID" value="NC_011770.1"/>
</dbReference>
<dbReference type="SMR" id="B7V594"/>
<dbReference type="KEGG" id="pag:PLES_55981"/>
<dbReference type="HOGENOM" id="CLU_024773_0_0_6"/>
<dbReference type="UniPathway" id="UPA00068">
    <property type="reaction ID" value="UER00106"/>
</dbReference>
<dbReference type="GO" id="GO:0005737">
    <property type="term" value="C:cytoplasm"/>
    <property type="evidence" value="ECO:0007669"/>
    <property type="project" value="UniProtKB-SubCell"/>
</dbReference>
<dbReference type="GO" id="GO:0004042">
    <property type="term" value="F:L-glutamate N-acetyltransferase activity"/>
    <property type="evidence" value="ECO:0007669"/>
    <property type="project" value="UniProtKB-UniRule"/>
</dbReference>
<dbReference type="GO" id="GO:0006526">
    <property type="term" value="P:L-arginine biosynthetic process"/>
    <property type="evidence" value="ECO:0007669"/>
    <property type="project" value="UniProtKB-UniRule"/>
</dbReference>
<dbReference type="CDD" id="cd04237">
    <property type="entry name" value="AAK_NAGS-ABP"/>
    <property type="match status" value="1"/>
</dbReference>
<dbReference type="CDD" id="cd04301">
    <property type="entry name" value="NAT_SF"/>
    <property type="match status" value="1"/>
</dbReference>
<dbReference type="FunFam" id="3.40.1160.10:FF:000005">
    <property type="entry name" value="Amino-acid acetyltransferase"/>
    <property type="match status" value="1"/>
</dbReference>
<dbReference type="Gene3D" id="3.40.630.30">
    <property type="match status" value="1"/>
</dbReference>
<dbReference type="Gene3D" id="3.40.1160.10">
    <property type="entry name" value="Acetylglutamate kinase-like"/>
    <property type="match status" value="1"/>
</dbReference>
<dbReference type="HAMAP" id="MF_01105">
    <property type="entry name" value="N_acetyl_glu_synth"/>
    <property type="match status" value="1"/>
</dbReference>
<dbReference type="InterPro" id="IPR036393">
    <property type="entry name" value="AceGlu_kinase-like_sf"/>
</dbReference>
<dbReference type="InterPro" id="IPR016181">
    <property type="entry name" value="Acyl_CoA_acyltransferase"/>
</dbReference>
<dbReference type="InterPro" id="IPR001048">
    <property type="entry name" value="Asp/Glu/Uridylate_kinase"/>
</dbReference>
<dbReference type="InterPro" id="IPR000182">
    <property type="entry name" value="GNAT_dom"/>
</dbReference>
<dbReference type="InterPro" id="IPR033719">
    <property type="entry name" value="NAGS_kin"/>
</dbReference>
<dbReference type="InterPro" id="IPR010167">
    <property type="entry name" value="NH2A_AcTrfase"/>
</dbReference>
<dbReference type="NCBIfam" id="TIGR01890">
    <property type="entry name" value="N-Ac-Glu-synth"/>
    <property type="match status" value="1"/>
</dbReference>
<dbReference type="NCBIfam" id="NF003641">
    <property type="entry name" value="PRK05279.1"/>
    <property type="match status" value="1"/>
</dbReference>
<dbReference type="PANTHER" id="PTHR30602">
    <property type="entry name" value="AMINO-ACID ACETYLTRANSFERASE"/>
    <property type="match status" value="1"/>
</dbReference>
<dbReference type="PANTHER" id="PTHR30602:SF12">
    <property type="entry name" value="AMINO-ACID ACETYLTRANSFERASE NAGS1, CHLOROPLASTIC-RELATED"/>
    <property type="match status" value="1"/>
</dbReference>
<dbReference type="Pfam" id="PF00696">
    <property type="entry name" value="AA_kinase"/>
    <property type="match status" value="1"/>
</dbReference>
<dbReference type="Pfam" id="PF00583">
    <property type="entry name" value="Acetyltransf_1"/>
    <property type="match status" value="1"/>
</dbReference>
<dbReference type="PIRSF" id="PIRSF000423">
    <property type="entry name" value="ArgA"/>
    <property type="match status" value="1"/>
</dbReference>
<dbReference type="SUPFAM" id="SSF55729">
    <property type="entry name" value="Acyl-CoA N-acyltransferases (Nat)"/>
    <property type="match status" value="1"/>
</dbReference>
<dbReference type="SUPFAM" id="SSF53633">
    <property type="entry name" value="Carbamate kinase-like"/>
    <property type="match status" value="1"/>
</dbReference>
<dbReference type="PROSITE" id="PS51186">
    <property type="entry name" value="GNAT"/>
    <property type="match status" value="1"/>
</dbReference>
<protein>
    <recommendedName>
        <fullName evidence="1">Amino-acid acetyltransferase</fullName>
        <ecNumber evidence="1">2.3.1.1</ecNumber>
    </recommendedName>
    <alternativeName>
        <fullName evidence="1">N-acetylglutamate synthase</fullName>
        <shortName evidence="1">AGS</shortName>
        <shortName evidence="1">NAGS</shortName>
    </alternativeName>
</protein>
<evidence type="ECO:0000255" key="1">
    <source>
        <dbReference type="HAMAP-Rule" id="MF_01105"/>
    </source>
</evidence>
<gene>
    <name evidence="1" type="primary">argA</name>
    <name type="ordered locus">PLES_55981</name>
</gene>
<feature type="chain" id="PRO_1000137052" description="Amino-acid acetyltransferase">
    <location>
        <begin position="1"/>
        <end position="432"/>
    </location>
</feature>
<feature type="domain" description="N-acetyltransferase" evidence="1">
    <location>
        <begin position="286"/>
        <end position="425"/>
    </location>
</feature>
<organism>
    <name type="scientific">Pseudomonas aeruginosa (strain LESB58)</name>
    <dbReference type="NCBI Taxonomy" id="557722"/>
    <lineage>
        <taxon>Bacteria</taxon>
        <taxon>Pseudomonadati</taxon>
        <taxon>Pseudomonadota</taxon>
        <taxon>Gammaproteobacteria</taxon>
        <taxon>Pseudomonadales</taxon>
        <taxon>Pseudomonadaceae</taxon>
        <taxon>Pseudomonas</taxon>
    </lineage>
</organism>
<accession>B7V594</accession>
<name>ARGA_PSEA8</name>
<keyword id="KW-0012">Acyltransferase</keyword>
<keyword id="KW-0028">Amino-acid biosynthesis</keyword>
<keyword id="KW-0055">Arginine biosynthesis</keyword>
<keyword id="KW-0963">Cytoplasm</keyword>
<keyword id="KW-0808">Transferase</keyword>